<comment type="function">
    <text>May be involved in cell cycle regulation.</text>
</comment>
<comment type="subunit">
    <text evidence="2 3">Interacts with UHRF2/NIRF.</text>
</comment>
<comment type="interaction">
    <interactant intactId="EBI-10972020">
        <id>Q8WW12</id>
    </interactant>
    <interactant intactId="EBI-2432309">
        <id>Q92876</id>
        <label>KLK6</label>
    </interactant>
    <organismsDiffer>false</organismsDiffer>
    <experiments>3</experiments>
</comment>
<comment type="interaction">
    <interactant intactId="EBI-10972020">
        <id>Q8WW12</id>
    </interactant>
    <interactant intactId="EBI-750109">
        <id>Q9NYB0</id>
        <label>TERF2IP</label>
    </interactant>
    <organismsDiffer>false</organismsDiffer>
    <experiments>2</experiments>
</comment>
<comment type="subcellular location">
    <subcellularLocation>
        <location evidence="2">Nucleus</location>
    </subcellularLocation>
</comment>
<comment type="alternative products">
    <event type="alternative splicing"/>
    <isoform>
        <id>Q8WW12-1</id>
        <name>1</name>
        <sequence type="displayed"/>
    </isoform>
    <isoform>
        <id>Q8WW12-2</id>
        <name>2</name>
        <sequence type="described" ref="VSP_013880 VSP_013881"/>
    </isoform>
    <isoform>
        <id>Q8WW12-3</id>
        <name>3</name>
        <sequence type="described" ref="VSP_013879"/>
    </isoform>
</comment>
<comment type="PTM">
    <text evidence="3">Ubiquitinated; mediated by UHRF2 and leading to its subsequent proteasomal degradation.</text>
</comment>
<comment type="PTM">
    <text evidence="4">N-terminally acetylated in a HYPK-dependent manner by the NatA acetyltransferase complex which is composed of NAA10 and NAA15.</text>
</comment>
<comment type="sequence caution" evidence="7">
    <conflict type="erroneous initiation">
        <sequence resource="EMBL-CDS" id="EAW79790"/>
    </conflict>
    <text>Extended N-terminus.</text>
</comment>
<comment type="sequence caution" evidence="7">
    <conflict type="erroneous initiation">
        <sequence resource="EMBL-CDS" id="EAW79792"/>
    </conflict>
    <text>Extended N-terminus.</text>
</comment>
<name>PCNP_HUMAN</name>
<accession>Q8WW12</accession>
<accession>B2RBE7</accession>
<accession>D3DN52</accession>
<accession>Q53GF3</accession>
<accession>Q6AI44</accession>
<accession>Q96CU3</accession>
<accession>Q9NS81</accession>
<keyword id="KW-0007">Acetylation</keyword>
<keyword id="KW-0025">Alternative splicing</keyword>
<keyword id="KW-0131">Cell cycle</keyword>
<keyword id="KW-0539">Nucleus</keyword>
<keyword id="KW-0597">Phosphoprotein</keyword>
<keyword id="KW-1267">Proteomics identification</keyword>
<keyword id="KW-1185">Reference proteome</keyword>
<keyword id="KW-0832">Ubl conjugation</keyword>
<protein>
    <recommendedName>
        <fullName>PEST proteolytic signal-containing nuclear protein</fullName>
        <shortName>PCNP</shortName>
        <shortName>PEST-containing nuclear protein</shortName>
    </recommendedName>
</protein>
<gene>
    <name type="primary">PCNP</name>
</gene>
<sequence length="178" mass="18925">MADGKAGDEKPEKSQRAGAAGGPEEEAEKPVKTKTVSSSNGGESSSRSAEKRSAEEEAADLPTKPTKISKFGFAIGSQTTKKASAISIKLGSSKPKETVPTLAPKTLSVAAAFNEDEDSEPEEMPPEAKMRMKNIGRDTPTSAGPNSFNKGKHGFSDNQKLWERNIKSHLGNVHDQDN</sequence>
<feature type="initiator methionine" description="Removed" evidence="4">
    <location>
        <position position="1"/>
    </location>
</feature>
<feature type="chain" id="PRO_0000058253" description="PEST proteolytic signal-containing nuclear protein">
    <location>
        <begin position="2"/>
        <end position="178"/>
    </location>
</feature>
<feature type="region of interest" description="Disordered" evidence="1">
    <location>
        <begin position="1"/>
        <end position="82"/>
    </location>
</feature>
<feature type="region of interest" description="Disordered" evidence="1">
    <location>
        <begin position="134"/>
        <end position="178"/>
    </location>
</feature>
<feature type="compositionally biased region" description="Basic and acidic residues" evidence="1">
    <location>
        <begin position="1"/>
        <end position="15"/>
    </location>
</feature>
<feature type="compositionally biased region" description="Low complexity" evidence="1">
    <location>
        <begin position="37"/>
        <end position="47"/>
    </location>
</feature>
<feature type="compositionally biased region" description="Polar residues" evidence="1">
    <location>
        <begin position="139"/>
        <end position="149"/>
    </location>
</feature>
<feature type="compositionally biased region" description="Basic and acidic residues" evidence="1">
    <location>
        <begin position="160"/>
        <end position="178"/>
    </location>
</feature>
<feature type="modified residue" description="N-acetylalanine" evidence="4">
    <location>
        <position position="2"/>
    </location>
</feature>
<feature type="modified residue" description="Phosphoserine" evidence="11">
    <location>
        <position position="53"/>
    </location>
</feature>
<feature type="modified residue" description="N6-acetyllysine" evidence="9">
    <location>
        <position position="64"/>
    </location>
</feature>
<feature type="modified residue" description="Phosphoserine" evidence="11">
    <location>
        <position position="77"/>
    </location>
</feature>
<feature type="modified residue" description="Phosphoserine" evidence="8 11">
    <location>
        <position position="87"/>
    </location>
</feature>
<feature type="modified residue" description="Phosphoserine" evidence="8 10 11">
    <location>
        <position position="119"/>
    </location>
</feature>
<feature type="modified residue" description="Phosphothreonine" evidence="8 11">
    <location>
        <position position="139"/>
    </location>
</feature>
<feature type="modified residue" description="Phosphoserine" evidence="10 11">
    <location>
        <position position="147"/>
    </location>
</feature>
<feature type="modified residue" description="N6-acetyllysine" evidence="9">
    <location>
        <position position="150"/>
    </location>
</feature>
<feature type="modified residue" description="N6-acetyllysine" evidence="9">
    <location>
        <position position="152"/>
    </location>
</feature>
<feature type="splice variant" id="VSP_013879" description="In isoform 3." evidence="6">
    <location>
        <begin position="1"/>
        <end position="123"/>
    </location>
</feature>
<feature type="splice variant" id="VSP_013880" description="In isoform 2." evidence="5">
    <original>SEPEEMPPEAKM</original>
    <variation>GYTNISWTKLLQ</variation>
    <location>
        <begin position="119"/>
        <end position="130"/>
    </location>
</feature>
<feature type="splice variant" id="VSP_013881" description="In isoform 2." evidence="5">
    <location>
        <begin position="131"/>
        <end position="178"/>
    </location>
</feature>
<feature type="sequence conflict" description="In Ref. 6; AAH22001." evidence="7" ref="6">
    <original>P</original>
    <variation>Q</variation>
    <location>
        <position position="126"/>
    </location>
</feature>
<feature type="sequence conflict" description="In Ref. 3; BAD96698." evidence="7" ref="3">
    <original>K</original>
    <variation>E</variation>
    <location>
        <position position="150"/>
    </location>
</feature>
<evidence type="ECO:0000256" key="1">
    <source>
        <dbReference type="SAM" id="MobiDB-lite"/>
    </source>
</evidence>
<evidence type="ECO:0000269" key="2">
    <source>
    </source>
</evidence>
<evidence type="ECO:0000269" key="3">
    <source>
    </source>
</evidence>
<evidence type="ECO:0000269" key="4">
    <source>
    </source>
</evidence>
<evidence type="ECO:0000303" key="5">
    <source>
    </source>
</evidence>
<evidence type="ECO:0000303" key="6">
    <source>
    </source>
</evidence>
<evidence type="ECO:0000305" key="7"/>
<evidence type="ECO:0007744" key="8">
    <source>
    </source>
</evidence>
<evidence type="ECO:0007744" key="9">
    <source>
    </source>
</evidence>
<evidence type="ECO:0007744" key="10">
    <source>
    </source>
</evidence>
<evidence type="ECO:0007744" key="11">
    <source>
    </source>
</evidence>
<proteinExistence type="evidence at protein level"/>
<organism>
    <name type="scientific">Homo sapiens</name>
    <name type="common">Human</name>
    <dbReference type="NCBI Taxonomy" id="9606"/>
    <lineage>
        <taxon>Eukaryota</taxon>
        <taxon>Metazoa</taxon>
        <taxon>Chordata</taxon>
        <taxon>Craniata</taxon>
        <taxon>Vertebrata</taxon>
        <taxon>Euteleostomi</taxon>
        <taxon>Mammalia</taxon>
        <taxon>Eutheria</taxon>
        <taxon>Euarchontoglires</taxon>
        <taxon>Primates</taxon>
        <taxon>Haplorrhini</taxon>
        <taxon>Catarrhini</taxon>
        <taxon>Hominidae</taxon>
        <taxon>Homo</taxon>
    </lineage>
</organism>
<dbReference type="EMBL" id="AB037675">
    <property type="protein sequence ID" value="BAB03501.1"/>
    <property type="molecule type" value="mRNA"/>
</dbReference>
<dbReference type="EMBL" id="AK314629">
    <property type="protein sequence ID" value="BAG37194.1"/>
    <property type="molecule type" value="mRNA"/>
</dbReference>
<dbReference type="EMBL" id="AK222978">
    <property type="protein sequence ID" value="BAD96698.1"/>
    <property type="molecule type" value="mRNA"/>
</dbReference>
<dbReference type="EMBL" id="CR627371">
    <property type="protein sequence ID" value="CAH10470.1"/>
    <property type="molecule type" value="mRNA"/>
</dbReference>
<dbReference type="EMBL" id="CH471052">
    <property type="protein sequence ID" value="EAW79790.1"/>
    <property type="status" value="ALT_INIT"/>
    <property type="molecule type" value="Genomic_DNA"/>
</dbReference>
<dbReference type="EMBL" id="CH471052">
    <property type="protein sequence ID" value="EAW79792.1"/>
    <property type="status" value="ALT_INIT"/>
    <property type="molecule type" value="Genomic_DNA"/>
</dbReference>
<dbReference type="EMBL" id="BC013916">
    <property type="protein sequence ID" value="AAH13916.1"/>
    <property type="molecule type" value="mRNA"/>
</dbReference>
<dbReference type="EMBL" id="BC022001">
    <property type="protein sequence ID" value="AAH22001.1"/>
    <property type="molecule type" value="mRNA"/>
</dbReference>
<dbReference type="CCDS" id="CCDS2942.1">
    <molecule id="Q8WW12-1"/>
</dbReference>
<dbReference type="RefSeq" id="NP_001307324.1">
    <molecule id="Q8WW12-2"/>
    <property type="nucleotide sequence ID" value="NM_001320395.1"/>
</dbReference>
<dbReference type="RefSeq" id="NP_001307326.1">
    <property type="nucleotide sequence ID" value="NM_001320397.1"/>
</dbReference>
<dbReference type="RefSeq" id="NP_001307327.1">
    <property type="nucleotide sequence ID" value="NM_001320398.1"/>
</dbReference>
<dbReference type="RefSeq" id="NP_001307328.1">
    <property type="nucleotide sequence ID" value="NM_001320399.1"/>
</dbReference>
<dbReference type="RefSeq" id="NP_001307329.1">
    <property type="nucleotide sequence ID" value="NM_001320400.1"/>
</dbReference>
<dbReference type="RefSeq" id="NP_001307330.1">
    <property type="nucleotide sequence ID" value="NM_001320401.1"/>
</dbReference>
<dbReference type="RefSeq" id="NP_065090.1">
    <molecule id="Q8WW12-1"/>
    <property type="nucleotide sequence ID" value="NM_020357.3"/>
</dbReference>
<dbReference type="BioGRID" id="121360">
    <property type="interactions" value="99"/>
</dbReference>
<dbReference type="FunCoup" id="Q8WW12">
    <property type="interactions" value="3771"/>
</dbReference>
<dbReference type="IntAct" id="Q8WW12">
    <property type="interactions" value="80"/>
</dbReference>
<dbReference type="STRING" id="9606.ENSP00000265260"/>
<dbReference type="GlyCosmos" id="Q8WW12">
    <property type="glycosylation" value="1 site, 1 glycan"/>
</dbReference>
<dbReference type="GlyGen" id="Q8WW12">
    <property type="glycosylation" value="5 sites, 1 O-linked glycan (5 sites)"/>
</dbReference>
<dbReference type="iPTMnet" id="Q8WW12"/>
<dbReference type="PhosphoSitePlus" id="Q8WW12"/>
<dbReference type="BioMuta" id="PCNP"/>
<dbReference type="DMDM" id="67460963"/>
<dbReference type="jPOST" id="Q8WW12"/>
<dbReference type="MassIVE" id="Q8WW12"/>
<dbReference type="PaxDb" id="9606-ENSP00000265260"/>
<dbReference type="PeptideAtlas" id="Q8WW12"/>
<dbReference type="ProteomicsDB" id="74842">
    <molecule id="Q8WW12-1"/>
</dbReference>
<dbReference type="ProteomicsDB" id="74843">
    <molecule id="Q8WW12-2"/>
</dbReference>
<dbReference type="ProteomicsDB" id="74844">
    <molecule id="Q8WW12-3"/>
</dbReference>
<dbReference type="Pumba" id="Q8WW12"/>
<dbReference type="TopDownProteomics" id="Q8WW12-1">
    <molecule id="Q8WW12-1"/>
</dbReference>
<dbReference type="TopDownProteomics" id="Q8WW12-2">
    <molecule id="Q8WW12-2"/>
</dbReference>
<dbReference type="TopDownProteomics" id="Q8WW12-3">
    <molecule id="Q8WW12-3"/>
</dbReference>
<dbReference type="Antibodypedia" id="32287">
    <property type="antibodies" value="172 antibodies from 27 providers"/>
</dbReference>
<dbReference type="DNASU" id="57092"/>
<dbReference type="Ensembl" id="ENST00000265260.8">
    <molecule id="Q8WW12-1"/>
    <property type="protein sequence ID" value="ENSP00000265260.3"/>
    <property type="gene ID" value="ENSG00000081154.12"/>
</dbReference>
<dbReference type="Ensembl" id="ENST00000469941.5">
    <molecule id="Q8WW12-3"/>
    <property type="protein sequence ID" value="ENSP00000470810.1"/>
    <property type="gene ID" value="ENSG00000081154.12"/>
</dbReference>
<dbReference type="GeneID" id="57092"/>
<dbReference type="KEGG" id="hsa:57092"/>
<dbReference type="MANE-Select" id="ENST00000265260.8">
    <property type="protein sequence ID" value="ENSP00000265260.3"/>
    <property type="RefSeq nucleotide sequence ID" value="NM_020357.3"/>
    <property type="RefSeq protein sequence ID" value="NP_065090.1"/>
</dbReference>
<dbReference type="UCSC" id="uc003dva.4">
    <molecule id="Q8WW12-1"/>
    <property type="organism name" value="human"/>
</dbReference>
<dbReference type="AGR" id="HGNC:30023"/>
<dbReference type="CTD" id="57092"/>
<dbReference type="DisGeNET" id="57092"/>
<dbReference type="GeneCards" id="PCNP"/>
<dbReference type="HGNC" id="HGNC:30023">
    <property type="gene designation" value="PCNP"/>
</dbReference>
<dbReference type="HPA" id="ENSG00000081154">
    <property type="expression patterns" value="Low tissue specificity"/>
</dbReference>
<dbReference type="MIM" id="615210">
    <property type="type" value="gene"/>
</dbReference>
<dbReference type="neXtProt" id="NX_Q8WW12"/>
<dbReference type="OpenTargets" id="ENSG00000081154"/>
<dbReference type="PharmGKB" id="PA143485572"/>
<dbReference type="VEuPathDB" id="HostDB:ENSG00000081154"/>
<dbReference type="eggNOG" id="ENOG502QWEZ">
    <property type="taxonomic scope" value="Eukaryota"/>
</dbReference>
<dbReference type="GeneTree" id="ENSGT00390000010218"/>
<dbReference type="HOGENOM" id="CLU_118645_1_0_1"/>
<dbReference type="InParanoid" id="Q8WW12"/>
<dbReference type="OMA" id="EKDMMAD"/>
<dbReference type="OrthoDB" id="10068198at2759"/>
<dbReference type="PAN-GO" id="Q8WW12">
    <property type="GO annotations" value="3 GO annotations based on evolutionary models"/>
</dbReference>
<dbReference type="PhylomeDB" id="Q8WW12"/>
<dbReference type="TreeFam" id="TF333058"/>
<dbReference type="PathwayCommons" id="Q8WW12"/>
<dbReference type="SignaLink" id="Q8WW12"/>
<dbReference type="SIGNOR" id="Q8WW12"/>
<dbReference type="BioGRID-ORCS" id="57092">
    <property type="hits" value="67 hits in 1119 CRISPR screens"/>
</dbReference>
<dbReference type="ChiTaRS" id="PCNP">
    <property type="organism name" value="human"/>
</dbReference>
<dbReference type="GenomeRNAi" id="57092"/>
<dbReference type="Pharos" id="Q8WW12">
    <property type="development level" value="Tbio"/>
</dbReference>
<dbReference type="PRO" id="PR:Q8WW12"/>
<dbReference type="Proteomes" id="UP000005640">
    <property type="component" value="Chromosome 3"/>
</dbReference>
<dbReference type="RNAct" id="Q8WW12">
    <property type="molecule type" value="protein"/>
</dbReference>
<dbReference type="Bgee" id="ENSG00000081154">
    <property type="expression patterns" value="Expressed in calcaneal tendon and 211 other cell types or tissues"/>
</dbReference>
<dbReference type="ExpressionAtlas" id="Q8WW12">
    <property type="expression patterns" value="baseline and differential"/>
</dbReference>
<dbReference type="GO" id="GO:0016604">
    <property type="term" value="C:nuclear body"/>
    <property type="evidence" value="ECO:0000314"/>
    <property type="project" value="HPA"/>
</dbReference>
<dbReference type="GO" id="GO:0005654">
    <property type="term" value="C:nucleoplasm"/>
    <property type="evidence" value="ECO:0000314"/>
    <property type="project" value="HPA"/>
</dbReference>
<dbReference type="GO" id="GO:0005634">
    <property type="term" value="C:nucleus"/>
    <property type="evidence" value="ECO:0000314"/>
    <property type="project" value="HGNC-UCL"/>
</dbReference>
<dbReference type="GO" id="GO:0043161">
    <property type="term" value="P:proteasome-mediated ubiquitin-dependent protein catabolic process"/>
    <property type="evidence" value="ECO:0000314"/>
    <property type="project" value="HGNC-UCL"/>
</dbReference>
<dbReference type="GO" id="GO:0016567">
    <property type="term" value="P:protein ubiquitination"/>
    <property type="evidence" value="ECO:0000314"/>
    <property type="project" value="HGNC-UCL"/>
</dbReference>
<dbReference type="InterPro" id="IPR029169">
    <property type="entry name" value="PCNP"/>
</dbReference>
<dbReference type="PANTHER" id="PTHR16523">
    <property type="entry name" value="PEST PROTEOLYTIC SIGNAL-CONTAINING NUCLEAR PROTEIN"/>
    <property type="match status" value="1"/>
</dbReference>
<dbReference type="PANTHER" id="PTHR16523:SF8">
    <property type="entry name" value="PEST PROTEOLYTIC SIGNAL-CONTAINING NUCLEAR PROTEIN"/>
    <property type="match status" value="1"/>
</dbReference>
<dbReference type="Pfam" id="PF15473">
    <property type="entry name" value="PCNP"/>
    <property type="match status" value="1"/>
</dbReference>
<reference key="1">
    <citation type="journal article" date="2002" name="Biochem. Biophys. Res. Commun.">
        <title>NIRF, a novel RING finger protein, is involved in cell-cycle regulation.</title>
        <authorList>
            <person name="Mori T."/>
            <person name="Li Y."/>
            <person name="Hata H."/>
            <person name="Ono K."/>
            <person name="Kochi H."/>
        </authorList>
    </citation>
    <scope>NUCLEOTIDE SEQUENCE [MRNA] (ISOFORM 1)</scope>
    <scope>SUBCELLULAR LOCATION</scope>
    <scope>INTERACTION WITH UHRF2</scope>
    <source>
        <tissue>Brain</tissue>
    </source>
</reference>
<reference key="2">
    <citation type="journal article" date="2004" name="Nat. Genet.">
        <title>Complete sequencing and characterization of 21,243 full-length human cDNAs.</title>
        <authorList>
            <person name="Ota T."/>
            <person name="Suzuki Y."/>
            <person name="Nishikawa T."/>
            <person name="Otsuki T."/>
            <person name="Sugiyama T."/>
            <person name="Irie R."/>
            <person name="Wakamatsu A."/>
            <person name="Hayashi K."/>
            <person name="Sato H."/>
            <person name="Nagai K."/>
            <person name="Kimura K."/>
            <person name="Makita H."/>
            <person name="Sekine M."/>
            <person name="Obayashi M."/>
            <person name="Nishi T."/>
            <person name="Shibahara T."/>
            <person name="Tanaka T."/>
            <person name="Ishii S."/>
            <person name="Yamamoto J."/>
            <person name="Saito K."/>
            <person name="Kawai Y."/>
            <person name="Isono Y."/>
            <person name="Nakamura Y."/>
            <person name="Nagahari K."/>
            <person name="Murakami K."/>
            <person name="Yasuda T."/>
            <person name="Iwayanagi T."/>
            <person name="Wagatsuma M."/>
            <person name="Shiratori A."/>
            <person name="Sudo H."/>
            <person name="Hosoiri T."/>
            <person name="Kaku Y."/>
            <person name="Kodaira H."/>
            <person name="Kondo H."/>
            <person name="Sugawara M."/>
            <person name="Takahashi M."/>
            <person name="Kanda K."/>
            <person name="Yokoi T."/>
            <person name="Furuya T."/>
            <person name="Kikkawa E."/>
            <person name="Omura Y."/>
            <person name="Abe K."/>
            <person name="Kamihara K."/>
            <person name="Katsuta N."/>
            <person name="Sato K."/>
            <person name="Tanikawa M."/>
            <person name="Yamazaki M."/>
            <person name="Ninomiya K."/>
            <person name="Ishibashi T."/>
            <person name="Yamashita H."/>
            <person name="Murakawa K."/>
            <person name="Fujimori K."/>
            <person name="Tanai H."/>
            <person name="Kimata M."/>
            <person name="Watanabe M."/>
            <person name="Hiraoka S."/>
            <person name="Chiba Y."/>
            <person name="Ishida S."/>
            <person name="Ono Y."/>
            <person name="Takiguchi S."/>
            <person name="Watanabe S."/>
            <person name="Yosida M."/>
            <person name="Hotuta T."/>
            <person name="Kusano J."/>
            <person name="Kanehori K."/>
            <person name="Takahashi-Fujii A."/>
            <person name="Hara H."/>
            <person name="Tanase T.-O."/>
            <person name="Nomura Y."/>
            <person name="Togiya S."/>
            <person name="Komai F."/>
            <person name="Hara R."/>
            <person name="Takeuchi K."/>
            <person name="Arita M."/>
            <person name="Imose N."/>
            <person name="Musashino K."/>
            <person name="Yuuki H."/>
            <person name="Oshima A."/>
            <person name="Sasaki N."/>
            <person name="Aotsuka S."/>
            <person name="Yoshikawa Y."/>
            <person name="Matsunawa H."/>
            <person name="Ichihara T."/>
            <person name="Shiohata N."/>
            <person name="Sano S."/>
            <person name="Moriya S."/>
            <person name="Momiyama H."/>
            <person name="Satoh N."/>
            <person name="Takami S."/>
            <person name="Terashima Y."/>
            <person name="Suzuki O."/>
            <person name="Nakagawa S."/>
            <person name="Senoh A."/>
            <person name="Mizoguchi H."/>
            <person name="Goto Y."/>
            <person name="Shimizu F."/>
            <person name="Wakebe H."/>
            <person name="Hishigaki H."/>
            <person name="Watanabe T."/>
            <person name="Sugiyama A."/>
            <person name="Takemoto M."/>
            <person name="Kawakami B."/>
            <person name="Yamazaki M."/>
            <person name="Watanabe K."/>
            <person name="Kumagai A."/>
            <person name="Itakura S."/>
            <person name="Fukuzumi Y."/>
            <person name="Fujimori Y."/>
            <person name="Komiyama M."/>
            <person name="Tashiro H."/>
            <person name="Tanigami A."/>
            <person name="Fujiwara T."/>
            <person name="Ono T."/>
            <person name="Yamada K."/>
            <person name="Fujii Y."/>
            <person name="Ozaki K."/>
            <person name="Hirao M."/>
            <person name="Ohmori Y."/>
            <person name="Kawabata A."/>
            <person name="Hikiji T."/>
            <person name="Kobatake N."/>
            <person name="Inagaki H."/>
            <person name="Ikema Y."/>
            <person name="Okamoto S."/>
            <person name="Okitani R."/>
            <person name="Kawakami T."/>
            <person name="Noguchi S."/>
            <person name="Itoh T."/>
            <person name="Shigeta K."/>
            <person name="Senba T."/>
            <person name="Matsumura K."/>
            <person name="Nakajima Y."/>
            <person name="Mizuno T."/>
            <person name="Morinaga M."/>
            <person name="Sasaki M."/>
            <person name="Togashi T."/>
            <person name="Oyama M."/>
            <person name="Hata H."/>
            <person name="Watanabe M."/>
            <person name="Komatsu T."/>
            <person name="Mizushima-Sugano J."/>
            <person name="Satoh T."/>
            <person name="Shirai Y."/>
            <person name="Takahashi Y."/>
            <person name="Nakagawa K."/>
            <person name="Okumura K."/>
            <person name="Nagase T."/>
            <person name="Nomura N."/>
            <person name="Kikuchi H."/>
            <person name="Masuho Y."/>
            <person name="Yamashita R."/>
            <person name="Nakai K."/>
            <person name="Yada T."/>
            <person name="Nakamura Y."/>
            <person name="Ohara O."/>
            <person name="Isogai T."/>
            <person name="Sugano S."/>
        </authorList>
    </citation>
    <scope>NUCLEOTIDE SEQUENCE [LARGE SCALE MRNA] (ISOFORM 1)</scope>
</reference>
<reference key="3">
    <citation type="submission" date="2005-04" db="EMBL/GenBank/DDBJ databases">
        <authorList>
            <person name="Suzuki Y."/>
            <person name="Sugano S."/>
            <person name="Totoki Y."/>
            <person name="Toyoda A."/>
            <person name="Takeda T."/>
            <person name="Sakaki Y."/>
            <person name="Tanaka A."/>
            <person name="Yokoyama S."/>
        </authorList>
    </citation>
    <scope>NUCLEOTIDE SEQUENCE [LARGE SCALE MRNA] (ISOFORM 1)</scope>
    <source>
        <tissue>Small intestine</tissue>
    </source>
</reference>
<reference key="4">
    <citation type="journal article" date="2007" name="BMC Genomics">
        <title>The full-ORF clone resource of the German cDNA consortium.</title>
        <authorList>
            <person name="Bechtel S."/>
            <person name="Rosenfelder H."/>
            <person name="Duda A."/>
            <person name="Schmidt C.P."/>
            <person name="Ernst U."/>
            <person name="Wellenreuther R."/>
            <person name="Mehrle A."/>
            <person name="Schuster C."/>
            <person name="Bahr A."/>
            <person name="Bloecker H."/>
            <person name="Heubner D."/>
            <person name="Hoerlein A."/>
            <person name="Michel G."/>
            <person name="Wedler H."/>
            <person name="Koehrer K."/>
            <person name="Ottenwaelder B."/>
            <person name="Poustka A."/>
            <person name="Wiemann S."/>
            <person name="Schupp I."/>
        </authorList>
    </citation>
    <scope>NUCLEOTIDE SEQUENCE [LARGE SCALE MRNA] (ISOFORM 3)</scope>
    <source>
        <tissue>Brain cortex</tissue>
    </source>
</reference>
<reference key="5">
    <citation type="submission" date="2005-09" db="EMBL/GenBank/DDBJ databases">
        <authorList>
            <person name="Mural R.J."/>
            <person name="Istrail S."/>
            <person name="Sutton G.G."/>
            <person name="Florea L."/>
            <person name="Halpern A.L."/>
            <person name="Mobarry C.M."/>
            <person name="Lippert R."/>
            <person name="Walenz B."/>
            <person name="Shatkay H."/>
            <person name="Dew I."/>
            <person name="Miller J.R."/>
            <person name="Flanigan M.J."/>
            <person name="Edwards N.J."/>
            <person name="Bolanos R."/>
            <person name="Fasulo D."/>
            <person name="Halldorsson B.V."/>
            <person name="Hannenhalli S."/>
            <person name="Turner R."/>
            <person name="Yooseph S."/>
            <person name="Lu F."/>
            <person name="Nusskern D.R."/>
            <person name="Shue B.C."/>
            <person name="Zheng X.H."/>
            <person name="Zhong F."/>
            <person name="Delcher A.L."/>
            <person name="Huson D.H."/>
            <person name="Kravitz S.A."/>
            <person name="Mouchard L."/>
            <person name="Reinert K."/>
            <person name="Remington K.A."/>
            <person name="Clark A.G."/>
            <person name="Waterman M.S."/>
            <person name="Eichler E.E."/>
            <person name="Adams M.D."/>
            <person name="Hunkapiller M.W."/>
            <person name="Myers E.W."/>
            <person name="Venter J.C."/>
        </authorList>
    </citation>
    <scope>NUCLEOTIDE SEQUENCE [LARGE SCALE GENOMIC DNA]</scope>
</reference>
<reference key="6">
    <citation type="journal article" date="2004" name="Genome Res.">
        <title>The status, quality, and expansion of the NIH full-length cDNA project: the Mammalian Gene Collection (MGC).</title>
        <authorList>
            <consortium name="The MGC Project Team"/>
        </authorList>
    </citation>
    <scope>NUCLEOTIDE SEQUENCE [LARGE SCALE MRNA] (ISOFORMS 1 AND 2)</scope>
    <source>
        <tissue>Brain</tissue>
        <tissue>Testis</tissue>
    </source>
</reference>
<reference key="7">
    <citation type="journal article" date="2004" name="FEBS Lett.">
        <title>NIRF is a ubiquitin ligase that is capable of ubiquitinating PCNP, a PEST-containing nuclear protein.</title>
        <authorList>
            <person name="Mori T."/>
            <person name="Li Y."/>
            <person name="Hata H."/>
            <person name="Kochi H."/>
        </authorList>
    </citation>
    <scope>UBIQUITINATION</scope>
    <scope>INTERACTION WITH UHRF2</scope>
</reference>
<reference key="8">
    <citation type="journal article" date="2008" name="Proc. Natl. Acad. Sci. U.S.A.">
        <title>A quantitative atlas of mitotic phosphorylation.</title>
        <authorList>
            <person name="Dephoure N."/>
            <person name="Zhou C."/>
            <person name="Villen J."/>
            <person name="Beausoleil S.A."/>
            <person name="Bakalarski C.E."/>
            <person name="Elledge S.J."/>
            <person name="Gygi S.P."/>
        </authorList>
    </citation>
    <scope>PHOSPHORYLATION [LARGE SCALE ANALYSIS] AT SER-87; SER-119 AND THR-139</scope>
    <scope>IDENTIFICATION BY MASS SPECTROMETRY [LARGE SCALE ANALYSIS]</scope>
    <source>
        <tissue>Cervix carcinoma</tissue>
    </source>
</reference>
<reference key="9">
    <citation type="journal article" date="2009" name="Anal. Chem.">
        <title>Lys-N and trypsin cover complementary parts of the phosphoproteome in a refined SCX-based approach.</title>
        <authorList>
            <person name="Gauci S."/>
            <person name="Helbig A.O."/>
            <person name="Slijper M."/>
            <person name="Krijgsveld J."/>
            <person name="Heck A.J."/>
            <person name="Mohammed S."/>
        </authorList>
    </citation>
    <scope>IDENTIFICATION BY MASS SPECTROMETRY [LARGE SCALE ANALYSIS]</scope>
</reference>
<reference key="10">
    <citation type="journal article" date="2009" name="Science">
        <title>Lysine acetylation targets protein complexes and co-regulates major cellular functions.</title>
        <authorList>
            <person name="Choudhary C."/>
            <person name="Kumar C."/>
            <person name="Gnad F."/>
            <person name="Nielsen M.L."/>
            <person name="Rehman M."/>
            <person name="Walther T.C."/>
            <person name="Olsen J.V."/>
            <person name="Mann M."/>
        </authorList>
    </citation>
    <scope>ACETYLATION [LARGE SCALE ANALYSIS] AT LYS-64; LYS-150 AND LYS-152</scope>
    <scope>IDENTIFICATION BY MASS SPECTROMETRY [LARGE SCALE ANALYSIS]</scope>
</reference>
<reference key="11">
    <citation type="journal article" date="2010" name="Mol. Cell. Biol.">
        <title>The chaperone-like protein HYPK acts together with NatA in cotranslational N-terminal acetylation and prevention of Huntingtin aggregation.</title>
        <authorList>
            <person name="Arnesen T."/>
            <person name="Starheim K.K."/>
            <person name="Van Damme P."/>
            <person name="Evjenth R."/>
            <person name="Dinh H."/>
            <person name="Betts M.J."/>
            <person name="Ryningen A."/>
            <person name="Vandekerckhove J."/>
            <person name="Gevaert K."/>
            <person name="Anderson D."/>
        </authorList>
    </citation>
    <scope>ACETYLATION AT ALA-2 BY NATA ACETYLTRANSFERASE COMPLEX</scope>
    <scope>IDENTIFICATION BY MASS SPECTROMETRY</scope>
</reference>
<reference key="12">
    <citation type="journal article" date="2011" name="BMC Syst. Biol.">
        <title>Initial characterization of the human central proteome.</title>
        <authorList>
            <person name="Burkard T.R."/>
            <person name="Planyavsky M."/>
            <person name="Kaupe I."/>
            <person name="Breitwieser F.P."/>
            <person name="Buerckstuemmer T."/>
            <person name="Bennett K.L."/>
            <person name="Superti-Furga G."/>
            <person name="Colinge J."/>
        </authorList>
    </citation>
    <scope>IDENTIFICATION BY MASS SPECTROMETRY [LARGE SCALE ANALYSIS]</scope>
</reference>
<reference key="13">
    <citation type="journal article" date="2011" name="Sci. Signal.">
        <title>System-wide temporal characterization of the proteome and phosphoproteome of human embryonic stem cell differentiation.</title>
        <authorList>
            <person name="Rigbolt K.T."/>
            <person name="Prokhorova T.A."/>
            <person name="Akimov V."/>
            <person name="Henningsen J."/>
            <person name="Johansen P.T."/>
            <person name="Kratchmarova I."/>
            <person name="Kassem M."/>
            <person name="Mann M."/>
            <person name="Olsen J.V."/>
            <person name="Blagoev B."/>
        </authorList>
    </citation>
    <scope>PHOSPHORYLATION [LARGE SCALE ANALYSIS] AT SER-119 AND SER-147</scope>
    <scope>IDENTIFICATION BY MASS SPECTROMETRY [LARGE SCALE ANALYSIS]</scope>
</reference>
<reference key="14">
    <citation type="journal article" date="2012" name="Proc. Natl. Acad. Sci. U.S.A.">
        <title>N-terminal acetylome analyses and functional insights of the N-terminal acetyltransferase NatB.</title>
        <authorList>
            <person name="Van Damme P."/>
            <person name="Lasa M."/>
            <person name="Polevoda B."/>
            <person name="Gazquez C."/>
            <person name="Elosegui-Artola A."/>
            <person name="Kim D.S."/>
            <person name="De Juan-Pardo E."/>
            <person name="Demeyer K."/>
            <person name="Hole K."/>
            <person name="Larrea E."/>
            <person name="Timmerman E."/>
            <person name="Prieto J."/>
            <person name="Arnesen T."/>
            <person name="Sherman F."/>
            <person name="Gevaert K."/>
            <person name="Aldabe R."/>
        </authorList>
    </citation>
    <scope>IDENTIFICATION BY MASS SPECTROMETRY [LARGE SCALE ANALYSIS]</scope>
</reference>
<reference key="15">
    <citation type="journal article" date="2013" name="J. Proteome Res.">
        <title>Toward a comprehensive characterization of a human cancer cell phosphoproteome.</title>
        <authorList>
            <person name="Zhou H."/>
            <person name="Di Palma S."/>
            <person name="Preisinger C."/>
            <person name="Peng M."/>
            <person name="Polat A.N."/>
            <person name="Heck A.J."/>
            <person name="Mohammed S."/>
        </authorList>
    </citation>
    <scope>PHOSPHORYLATION [LARGE SCALE ANALYSIS] AT SER-53; SER-77; SER-87; SER-119; THR-139 AND SER-147</scope>
    <scope>IDENTIFICATION BY MASS SPECTROMETRY [LARGE SCALE ANALYSIS]</scope>
    <source>
        <tissue>Cervix carcinoma</tissue>
        <tissue>Erythroleukemia</tissue>
    </source>
</reference>